<feature type="chain" id="PRO_0000051581" description="Histone acetyltransferase KAT5">
    <location>
        <begin position="1"/>
        <end position="513"/>
    </location>
</feature>
<feature type="domain" description="Tudor-knot" evidence="3">
    <location>
        <begin position="8"/>
        <end position="65"/>
    </location>
</feature>
<feature type="domain" description="MYST-type HAT" evidence="4">
    <location>
        <begin position="227"/>
        <end position="504"/>
    </location>
</feature>
<feature type="zinc finger region" description="C2HC MYST-type" evidence="4">
    <location>
        <begin position="260"/>
        <end position="285"/>
    </location>
</feature>
<feature type="region of interest" description="Disordered" evidence="5">
    <location>
        <begin position="69"/>
        <end position="106"/>
    </location>
</feature>
<feature type="region of interest" description="Disordered" evidence="5">
    <location>
        <begin position="122"/>
        <end position="217"/>
    </location>
</feature>
<feature type="region of interest" description="Interaction with ATF2" evidence="1">
    <location>
        <begin position="368"/>
        <end position="513"/>
    </location>
</feature>
<feature type="compositionally biased region" description="Polar residues" evidence="5">
    <location>
        <begin position="133"/>
        <end position="144"/>
    </location>
</feature>
<feature type="active site" description="Proton donor/acceptor" evidence="2">
    <location>
        <position position="403"/>
    </location>
</feature>
<feature type="binding site" evidence="2">
    <location>
        <begin position="370"/>
        <end position="372"/>
    </location>
    <ligand>
        <name>acetyl-CoA</name>
        <dbReference type="ChEBI" id="CHEBI:57288"/>
    </ligand>
</feature>
<feature type="binding site" evidence="2">
    <location>
        <begin position="377"/>
        <end position="383"/>
    </location>
    <ligand>
        <name>acetyl-CoA</name>
        <dbReference type="ChEBI" id="CHEBI:57288"/>
    </ligand>
</feature>
<feature type="binding site" evidence="2">
    <location>
        <position position="407"/>
    </location>
    <ligand>
        <name>acetyl-CoA</name>
        <dbReference type="ChEBI" id="CHEBI:57288"/>
    </ligand>
</feature>
<feature type="binding site" evidence="2">
    <location>
        <position position="416"/>
    </location>
    <ligand>
        <name>acetyl-CoA</name>
        <dbReference type="ChEBI" id="CHEBI:57288"/>
    </ligand>
</feature>
<feature type="modified residue" description="N6-acetyllysine" evidence="1">
    <location>
        <position position="52"/>
    </location>
</feature>
<feature type="modified residue" description="Phosphoserine" evidence="10 14 15">
    <location>
        <position position="86"/>
    </location>
</feature>
<feature type="modified residue" description="Phosphoserine; by CDK1 and CDK9" evidence="15 21">
    <location>
        <position position="90"/>
    </location>
</feature>
<feature type="modified residue" description="N6-acetyllysine; by autocatalysis" evidence="1">
    <location>
        <position position="104"/>
    </location>
</feature>
<feature type="modified residue" description="N6-acetyllysine; by autocatalysis" evidence="1">
    <location>
        <position position="120"/>
    </location>
</feature>
<feature type="modified residue" description="N6-acetyllysine; by autocatalysis" evidence="1">
    <location>
        <position position="148"/>
    </location>
</feature>
<feature type="modified residue" description="N6-acetyllysine; by autocatalysis" evidence="1">
    <location>
        <position position="150"/>
    </location>
</feature>
<feature type="modified residue" description="N6-acetyllysine; by autocatalysis" evidence="1">
    <location>
        <position position="187"/>
    </location>
</feature>
<feature type="modified residue" description="N6-acetyllysine; by autocatalysis" evidence="1">
    <location>
        <position position="189"/>
    </location>
</feature>
<feature type="modified residue" description="Phosphoserine" evidence="32">
    <location>
        <position position="199"/>
    </location>
</feature>
<feature type="modified residue" description="N6-acetyllysine; by autocatalysis" evidence="1">
    <location>
        <position position="327"/>
    </location>
</feature>
<feature type="cross-link" description="Glycyl lysine isopeptide (Lys-Gly) (interchain with G-Cter in SUMO1); alternate" evidence="1">
    <location>
        <position position="430"/>
    </location>
</feature>
<feature type="cross-link" description="Glycyl lysine isopeptide (Lys-Gly) (interchain with G-Cter in SUMO2); alternate" evidence="1">
    <location>
        <position position="430"/>
    </location>
</feature>
<feature type="cross-link" description="Glycyl lysine isopeptide (Lys-Gly) (interchain with G-Cter in SUMO1)" evidence="1">
    <location>
        <position position="451"/>
    </location>
</feature>
<feature type="splice variant" id="VSP_009105" description="In isoform 4." evidence="28">
    <location>
        <begin position="1"/>
        <end position="211"/>
    </location>
</feature>
<feature type="splice variant" id="VSP_009106" description="In isoform 3." evidence="29">
    <original>V</original>
    <variation>VVSPVPGAGRREPGEVGRARGPPVADPGVALSPQ</variation>
    <location>
        <position position="4"/>
    </location>
</feature>
<feature type="splice variant" id="VSP_009107" description="In isoform 2." evidence="24 27">
    <location>
        <begin position="96"/>
        <end position="147"/>
    </location>
</feature>
<feature type="splice variant" id="VSP_061400" description="In isoform 5.">
    <original>YELSKVEGKTGTPEKPLSDLGLLSYRSYWSQTILEILMGLKSESGERPQITINEISEITSIKKEDVISTLQYLNLINYYKGQYILTLSEDIVDGHERAMLKRL</original>
    <variation>EYVLPDQELAGQACVGPILLRAAGVPRIAAKLMTLKRFPCPQTTKGSLITAIHPDTGWQGSDPSWQPSLADKYPTRAALLAFGPQHCRQGSCWSTPRAMNSRK</variation>
    <location>
        <begin position="390"/>
        <end position="492"/>
    </location>
</feature>
<feature type="splice variant" id="VSP_061401" description="In isoform 5.">
    <location>
        <begin position="493"/>
        <end position="513"/>
    </location>
</feature>
<feature type="mutagenesis site" description="Abolished phosphorylation by GSK3 and decreased acetyltransferase activity. Impaired ability to activate the cGAS-STING antiviral response in knockin mice. Lean phenotype caused by impaired ability to promote the synthesis of diacylglycerol in knockin mice. Decreased ability to promote homologous recombination (HR)repair in response to DNA double-strand breaks (DSBs)." evidence="10 14 15 19">
    <original>S</original>
    <variation>A</variation>
    <location>
        <position position="86"/>
    </location>
</feature>
<feature type="mutagenesis site" description="Mimics phosphorylation; constitutively active mutant that shows constitutive protein acetyltransferase activity. Increased ability to promote homologous recombination (HR)repair in response to DNA double-strand breaks (DSBs)." evidence="15">
    <original>S</original>
    <variation>D</variation>
    <location>
        <position position="86"/>
    </location>
</feature>
<feature type="mutagenesis site" description="Impaired phosphorylation and decreased acetyltransferase activity, leading to decreased ability to promote homologous recombination (HR)repair in response to DNA double-strand breaks (DSBs)." evidence="15">
    <original>S</original>
    <variation>A</variation>
    <location>
        <position position="90"/>
    </location>
</feature>
<feature type="mutagenesis site" description="Mimics phosphorylation; constitutively active mutant that shows constitutive protein acetyltransferase and acyltransferase activities in knockin mice. Increased ability to promote homologous recombination (HR)repair in response to DNA double-strand breaks (DSBs)." evidence="15 21">
    <original>S</original>
    <variation>D</variation>
    <location>
        <position position="90"/>
    </location>
</feature>
<feature type="mutagenesis site" description="Abolished acetyltransferase activity." evidence="18">
    <original>QRRG</original>
    <variation>ERRE</variation>
    <location>
        <begin position="377"/>
        <end position="380"/>
    </location>
</feature>
<feature type="sequence conflict" description="In Ref. 4; AAZ67923.1." evidence="29" ref="4">
    <original>R</original>
    <variation>G</variation>
    <location sequence="Q8CHK4-5">
        <position position="465"/>
    </location>
</feature>
<keyword id="KW-0007">Acetylation</keyword>
<keyword id="KW-0010">Activator</keyword>
<keyword id="KW-0012">Acyltransferase</keyword>
<keyword id="KW-0025">Alternative splicing</keyword>
<keyword id="KW-0137">Centromere</keyword>
<keyword id="KW-0156">Chromatin regulator</keyword>
<keyword id="KW-0158">Chromosome</keyword>
<keyword id="KW-0963">Cytoplasm</keyword>
<keyword id="KW-0206">Cytoskeleton</keyword>
<keyword id="KW-0227">DNA damage</keyword>
<keyword id="KW-0234">DNA repair</keyword>
<keyword id="KW-0341">Growth regulation</keyword>
<keyword id="KW-0391">Immunity</keyword>
<keyword id="KW-0399">Innate immunity</keyword>
<keyword id="KW-1017">Isopeptide bond</keyword>
<keyword id="KW-0995">Kinetochore</keyword>
<keyword id="KW-0479">Metal-binding</keyword>
<keyword id="KW-0539">Nucleus</keyword>
<keyword id="KW-0597">Phosphoprotein</keyword>
<keyword id="KW-1185">Reference proteome</keyword>
<keyword id="KW-0804">Transcription</keyword>
<keyword id="KW-0805">Transcription regulation</keyword>
<keyword id="KW-0808">Transferase</keyword>
<keyword id="KW-0832">Ubl conjugation</keyword>
<keyword id="KW-0862">Zinc</keyword>
<keyword id="KW-0863">Zinc-finger</keyword>
<evidence type="ECO:0000250" key="1">
    <source>
        <dbReference type="UniProtKB" id="Q92993"/>
    </source>
</evidence>
<evidence type="ECO:0000250" key="2">
    <source>
        <dbReference type="UniProtKB" id="Q9H7Z6"/>
    </source>
</evidence>
<evidence type="ECO:0000255" key="3"/>
<evidence type="ECO:0000255" key="4">
    <source>
        <dbReference type="PROSITE-ProRule" id="PRU01063"/>
    </source>
</evidence>
<evidence type="ECO:0000256" key="5">
    <source>
        <dbReference type="SAM" id="MobiDB-lite"/>
    </source>
</evidence>
<evidence type="ECO:0000269" key="6">
    <source>
    </source>
</evidence>
<evidence type="ECO:0000269" key="7">
    <source>
    </source>
</evidence>
<evidence type="ECO:0000269" key="8">
    <source>
    </source>
</evidence>
<evidence type="ECO:0000269" key="9">
    <source>
    </source>
</evidence>
<evidence type="ECO:0000269" key="10">
    <source>
    </source>
</evidence>
<evidence type="ECO:0000269" key="11">
    <source>
    </source>
</evidence>
<evidence type="ECO:0000269" key="12">
    <source>
    </source>
</evidence>
<evidence type="ECO:0000269" key="13">
    <source>
    </source>
</evidence>
<evidence type="ECO:0000269" key="14">
    <source>
    </source>
</evidence>
<evidence type="ECO:0000269" key="15">
    <source>
    </source>
</evidence>
<evidence type="ECO:0000269" key="16">
    <source>
    </source>
</evidence>
<evidence type="ECO:0000269" key="17">
    <source>
    </source>
</evidence>
<evidence type="ECO:0000269" key="18">
    <source>
    </source>
</evidence>
<evidence type="ECO:0000269" key="19">
    <source>
    </source>
</evidence>
<evidence type="ECO:0000269" key="20">
    <source>
    </source>
</evidence>
<evidence type="ECO:0000269" key="21">
    <source>
    </source>
</evidence>
<evidence type="ECO:0000303" key="22">
    <source>
    </source>
</evidence>
<evidence type="ECO:0000303" key="23">
    <source>
    </source>
</evidence>
<evidence type="ECO:0000303" key="24">
    <source>
    </source>
</evidence>
<evidence type="ECO:0000303" key="25">
    <source>
    </source>
</evidence>
<evidence type="ECO:0000303" key="26">
    <source>
    </source>
</evidence>
<evidence type="ECO:0000303" key="27">
    <source ref="3"/>
</evidence>
<evidence type="ECO:0000303" key="28">
    <source ref="5"/>
</evidence>
<evidence type="ECO:0000305" key="29"/>
<evidence type="ECO:0000305" key="30">
    <source>
    </source>
</evidence>
<evidence type="ECO:0000312" key="31">
    <source>
        <dbReference type="MGI" id="MGI:1932051"/>
    </source>
</evidence>
<evidence type="ECO:0007744" key="32">
    <source>
    </source>
</evidence>
<organism>
    <name type="scientific">Mus musculus</name>
    <name type="common">Mouse</name>
    <dbReference type="NCBI Taxonomy" id="10090"/>
    <lineage>
        <taxon>Eukaryota</taxon>
        <taxon>Metazoa</taxon>
        <taxon>Chordata</taxon>
        <taxon>Craniata</taxon>
        <taxon>Vertebrata</taxon>
        <taxon>Euteleostomi</taxon>
        <taxon>Mammalia</taxon>
        <taxon>Eutheria</taxon>
        <taxon>Euarchontoglires</taxon>
        <taxon>Glires</taxon>
        <taxon>Rodentia</taxon>
        <taxon>Myomorpha</taxon>
        <taxon>Muroidea</taxon>
        <taxon>Muridae</taxon>
        <taxon>Murinae</taxon>
        <taxon>Mus</taxon>
        <taxon>Mus</taxon>
    </lineage>
</organism>
<sequence length="513" mass="58598">MAEVGEIIEGCRLPVLRRNQDNEDEWPLAEILSVKDISGRKLFYVHYIDFNKRLDEWVTHERLDLKKIQFPKKEAKTPTKNGLPGSRPGSPEREVPASAQASGKTLPIPVQITLRFNLPKEREAIPGGEPDQPLSSSSCLQPNHRSTKRKVEVVSPATPVPSETAPASVFPQNGSARRAVAAQPGRKRKSNCLGTDEDSQDSSDGIPSAPRMTGSLVSDRSHDDIVTRMKNIECIELGRHRLKPWYFSPYPQELTTLPVLYLCEFCLKYGRSLKCLQRHLTKCDLRHPPGNEIYRKGTISFFEIDGRKNKSYSQNLCLLAKCFLDHKTLYYDTDPFLFYVMTEYDCKGFHIVGYFSKEKESTEDYNVACILTLPPYQRRGYGKLLIEFSYELSKVEGKTGTPEKPLSDLGLLSYRSYWSQTILEILMGLKSESGERPQITINEISEITSIKKEDVISTLQYLNLINYYKGQYILTLSEDIVDGHERAMLKRLLRIDSKCLHFTPKDWSKRGKW</sequence>
<gene>
    <name evidence="26 31" type="primary">Kat5</name>
    <name type="synonym">Htatip</name>
    <name evidence="22" type="synonym">Tip60</name>
</gene>
<protein>
    <recommendedName>
        <fullName evidence="29">Histone acetyltransferase KAT5</fullName>
        <ecNumber evidence="30">2.3.1.48</ecNumber>
    </recommendedName>
    <alternativeName>
        <fullName evidence="22">60 kDa Tat-interactive protein</fullName>
        <shortName evidence="22">Tip60</shortName>
    </alternativeName>
    <alternativeName>
        <fullName>Histone acetyltransferase HTATIP</fullName>
    </alternativeName>
    <alternativeName>
        <fullName>Lysine acetyltransferase 5</fullName>
    </alternativeName>
    <alternativeName>
        <fullName evidence="29">Protein 2-hydroxyisobutyryltransferase KAT5</fullName>
        <ecNumber evidence="1">2.3.1.-</ecNumber>
    </alternativeName>
    <alternativeName>
        <fullName evidence="29">Protein acetyltransferase KAT5</fullName>
        <ecNumber evidence="10 14 17">2.3.1.-</ecNumber>
    </alternativeName>
    <alternativeName>
        <fullName evidence="29">Protein crotonyltransferase KAT5</fullName>
        <ecNumber evidence="1">2.3.1.-</ecNumber>
    </alternativeName>
    <alternativeName>
        <fullName evidence="29">Protein lactyltransferase KAT5</fullName>
        <ecNumber evidence="1">2.3.1.-</ecNumber>
    </alternativeName>
</protein>
<name>KAT5_MOUSE</name>
<proteinExistence type="evidence at protein level"/>
<accession>Q8CHK4</accession>
<accession>A0A494B9U8</accession>
<accession>A1L394</accession>
<accession>Q3YFI9</accession>
<accession>Q8CGZ3</accession>
<accession>Q8CGZ4</accession>
<accession>Q8VIH0</accession>
<dbReference type="EC" id="2.3.1.48" evidence="30"/>
<dbReference type="EC" id="2.3.1.-" evidence="1 10 14 17"/>
<dbReference type="EMBL" id="AY061983">
    <property type="protein sequence ID" value="AAL34981.1"/>
    <property type="molecule type" value="Genomic_DNA"/>
</dbReference>
<dbReference type="EMBL" id="AF528194">
    <property type="protein sequence ID" value="AAN77140.1"/>
    <property type="molecule type" value="mRNA"/>
</dbReference>
<dbReference type="EMBL" id="AF528195">
    <property type="protein sequence ID" value="AAN77141.1"/>
    <property type="molecule type" value="mRNA"/>
</dbReference>
<dbReference type="EMBL" id="AF528196">
    <property type="protein sequence ID" value="AAN77142.1"/>
    <property type="molecule type" value="mRNA"/>
</dbReference>
<dbReference type="EMBL" id="DQ139980">
    <property type="protein sequence ID" value="AAZ67923.1"/>
    <property type="molecule type" value="mRNA"/>
</dbReference>
<dbReference type="EMBL" id="AB055409">
    <property type="protein sequence ID" value="BAC53807.1"/>
    <property type="molecule type" value="mRNA"/>
</dbReference>
<dbReference type="EMBL" id="BC129968">
    <property type="protein sequence ID" value="AAI29969.1"/>
    <property type="molecule type" value="mRNA"/>
</dbReference>
<dbReference type="EMBL" id="BC110675">
    <property type="protein sequence ID" value="AAI10676.1"/>
    <property type="molecule type" value="mRNA"/>
</dbReference>
<dbReference type="CCDS" id="CCDS29472.1">
    <molecule id="Q8CHK4-1"/>
</dbReference>
<dbReference type="CCDS" id="CCDS89314.1">
    <molecule id="Q8CHK4-2"/>
</dbReference>
<dbReference type="RefSeq" id="NP_001186176.1">
    <molecule id="Q8CHK4-2"/>
    <property type="nucleotide sequence ID" value="NM_001199247.1"/>
</dbReference>
<dbReference type="RefSeq" id="NP_001186177.1">
    <property type="nucleotide sequence ID" value="NM_001199248.1"/>
</dbReference>
<dbReference type="RefSeq" id="NP_001349299.1">
    <molecule id="Q8CHK4-4"/>
    <property type="nucleotide sequence ID" value="NM_001362370.1"/>
</dbReference>
<dbReference type="RefSeq" id="NP_001349300.1">
    <molecule id="Q8CHK4-4"/>
    <property type="nucleotide sequence ID" value="NM_001362371.1"/>
</dbReference>
<dbReference type="RefSeq" id="NP_848752.1">
    <molecule id="Q8CHK4-1"/>
    <property type="nucleotide sequence ID" value="NM_178637.2"/>
</dbReference>
<dbReference type="SMR" id="Q8CHK4"/>
<dbReference type="BioGRID" id="219884">
    <property type="interactions" value="59"/>
</dbReference>
<dbReference type="ComplexPortal" id="CPX-747">
    <property type="entry name" value="Piccolo NuA4 histone acetyltransferase complex"/>
</dbReference>
<dbReference type="ComplexPortal" id="CPX-990">
    <property type="entry name" value="NuA4 histone acetyltransferase complex"/>
</dbReference>
<dbReference type="CORUM" id="Q8CHK4"/>
<dbReference type="FunCoup" id="Q8CHK4">
    <property type="interactions" value="3043"/>
</dbReference>
<dbReference type="IntAct" id="Q8CHK4">
    <property type="interactions" value="30"/>
</dbReference>
<dbReference type="MINT" id="Q8CHK4"/>
<dbReference type="STRING" id="10090.ENSMUSP00000109271"/>
<dbReference type="iPTMnet" id="Q8CHK4"/>
<dbReference type="PhosphoSitePlus" id="Q8CHK4"/>
<dbReference type="jPOST" id="Q8CHK4"/>
<dbReference type="PaxDb" id="10090-ENSMUSP00000109271"/>
<dbReference type="PeptideAtlas" id="Q8CHK4"/>
<dbReference type="ProteomicsDB" id="301733">
    <molecule id="Q8CHK4-1"/>
</dbReference>
<dbReference type="ProteomicsDB" id="301734">
    <molecule id="Q8CHK4-2"/>
</dbReference>
<dbReference type="ProteomicsDB" id="301735">
    <molecule id="Q8CHK4-3"/>
</dbReference>
<dbReference type="ProteomicsDB" id="301736">
    <molecule id="Q8CHK4-4"/>
</dbReference>
<dbReference type="Antibodypedia" id="1823">
    <property type="antibodies" value="731 antibodies from 38 providers"/>
</dbReference>
<dbReference type="DNASU" id="81601"/>
<dbReference type="Ensembl" id="ENSMUST00000113641.4">
    <molecule id="Q8CHK4-1"/>
    <property type="protein sequence ID" value="ENSMUSP00000109271.3"/>
    <property type="gene ID" value="ENSMUSG00000024926.11"/>
</dbReference>
<dbReference type="Ensembl" id="ENSMUST00000236229.2">
    <molecule id="Q8CHK4-2"/>
    <property type="protein sequence ID" value="ENSMUSP00000158391.2"/>
    <property type="gene ID" value="ENSMUSG00000024926.11"/>
</dbReference>
<dbReference type="Ensembl" id="ENSMUST00000236883.2">
    <molecule id="Q8CHK4-5"/>
    <property type="protein sequence ID" value="ENSMUSP00000157766.2"/>
    <property type="gene ID" value="ENSMUSG00000024926.11"/>
</dbReference>
<dbReference type="GeneID" id="81601"/>
<dbReference type="KEGG" id="mmu:81601"/>
<dbReference type="UCSC" id="uc008gdy.2">
    <molecule id="Q8CHK4-1"/>
    <property type="organism name" value="mouse"/>
</dbReference>
<dbReference type="UCSC" id="uc008geb.2">
    <molecule id="Q8CHK4-2"/>
    <property type="organism name" value="mouse"/>
</dbReference>
<dbReference type="AGR" id="MGI:1932051"/>
<dbReference type="CTD" id="10524"/>
<dbReference type="MGI" id="MGI:1932051">
    <property type="gene designation" value="Kat5"/>
</dbReference>
<dbReference type="VEuPathDB" id="HostDB:ENSMUSG00000024926"/>
<dbReference type="eggNOG" id="KOG2747">
    <property type="taxonomic scope" value="Eukaryota"/>
</dbReference>
<dbReference type="GeneTree" id="ENSGT00940000162343"/>
<dbReference type="HOGENOM" id="CLU_011815_2_0_1"/>
<dbReference type="InParanoid" id="Q8CHK4"/>
<dbReference type="OMA" id="QYQRHGY"/>
<dbReference type="OrthoDB" id="787137at2759"/>
<dbReference type="PhylomeDB" id="Q8CHK4"/>
<dbReference type="TreeFam" id="TF317619"/>
<dbReference type="Reactome" id="R-MMU-201722">
    <property type="pathway name" value="Formation of the beta-catenin:TCF transactivating complex"/>
</dbReference>
<dbReference type="Reactome" id="R-MMU-2559586">
    <property type="pathway name" value="DNA Damage/Telomere Stress Induced Senescence"/>
</dbReference>
<dbReference type="Reactome" id="R-MMU-5685938">
    <property type="pathway name" value="HDR through Single Strand Annealing (SSA)"/>
</dbReference>
<dbReference type="Reactome" id="R-MMU-5685942">
    <property type="pathway name" value="HDR through Homologous Recombination (HRR)"/>
</dbReference>
<dbReference type="Reactome" id="R-MMU-5693548">
    <property type="pathway name" value="Sensing of DNA Double Strand Breaks"/>
</dbReference>
<dbReference type="Reactome" id="R-MMU-5693565">
    <property type="pathway name" value="Recruitment and ATM-mediated phosphorylation of repair and signaling proteins at DNA double strand breaks"/>
</dbReference>
<dbReference type="Reactome" id="R-MMU-5693568">
    <property type="pathway name" value="Resolution of D-loop Structures through Holliday Junction Intermediates"/>
</dbReference>
<dbReference type="Reactome" id="R-MMU-5693571">
    <property type="pathway name" value="Nonhomologous End-Joining (NHEJ)"/>
</dbReference>
<dbReference type="Reactome" id="R-MMU-5693579">
    <property type="pathway name" value="Homologous DNA Pairing and Strand Exchange"/>
</dbReference>
<dbReference type="Reactome" id="R-MMU-5693607">
    <property type="pathway name" value="Processing of DNA double-strand break ends"/>
</dbReference>
<dbReference type="Reactome" id="R-MMU-5693616">
    <property type="pathway name" value="Presynaptic phase of homologous DNA pairing and strand exchange"/>
</dbReference>
<dbReference type="Reactome" id="R-MMU-6804756">
    <property type="pathway name" value="Regulation of TP53 Activity through Phosphorylation"/>
</dbReference>
<dbReference type="Reactome" id="R-MMU-69473">
    <property type="pathway name" value="G2/M DNA damage checkpoint"/>
</dbReference>
<dbReference type="Reactome" id="R-MMU-9018519">
    <property type="pathway name" value="Estrogen-dependent gene expression"/>
</dbReference>
<dbReference type="BioGRID-ORCS" id="81601">
    <property type="hits" value="22 hits in 120 CRISPR screens"/>
</dbReference>
<dbReference type="ChiTaRS" id="Kat5">
    <property type="organism name" value="mouse"/>
</dbReference>
<dbReference type="PRO" id="PR:Q8CHK4"/>
<dbReference type="Proteomes" id="UP000000589">
    <property type="component" value="Chromosome 19"/>
</dbReference>
<dbReference type="RNAct" id="Q8CHK4">
    <property type="molecule type" value="protein"/>
</dbReference>
<dbReference type="Bgee" id="ENSMUSG00000024926">
    <property type="expression patterns" value="Expressed in retinal neural layer and 235 other cell types or tissues"/>
</dbReference>
<dbReference type="ExpressionAtlas" id="Q8CHK4">
    <property type="expression patterns" value="baseline and differential"/>
</dbReference>
<dbReference type="GO" id="GO:0005737">
    <property type="term" value="C:cytoplasm"/>
    <property type="evidence" value="ECO:0000250"/>
    <property type="project" value="UniProtKB"/>
</dbReference>
<dbReference type="GO" id="GO:0005829">
    <property type="term" value="C:cytosol"/>
    <property type="evidence" value="ECO:0007669"/>
    <property type="project" value="Ensembl"/>
</dbReference>
<dbReference type="GO" id="GO:0000776">
    <property type="term" value="C:kinetochore"/>
    <property type="evidence" value="ECO:0000250"/>
    <property type="project" value="UniProtKB"/>
</dbReference>
<dbReference type="GO" id="GO:0097431">
    <property type="term" value="C:mitotic spindle pole"/>
    <property type="evidence" value="ECO:0007669"/>
    <property type="project" value="Ensembl"/>
</dbReference>
<dbReference type="GO" id="GO:0035267">
    <property type="term" value="C:NuA4 histone acetyltransferase complex"/>
    <property type="evidence" value="ECO:0000314"/>
    <property type="project" value="UniProtKB"/>
</dbReference>
<dbReference type="GO" id="GO:0005730">
    <property type="term" value="C:nucleolus"/>
    <property type="evidence" value="ECO:0000250"/>
    <property type="project" value="UniProtKB"/>
</dbReference>
<dbReference type="GO" id="GO:0005654">
    <property type="term" value="C:nucleoplasm"/>
    <property type="evidence" value="ECO:0000304"/>
    <property type="project" value="Reactome"/>
</dbReference>
<dbReference type="GO" id="GO:0000786">
    <property type="term" value="C:nucleosome"/>
    <property type="evidence" value="ECO:0000266"/>
    <property type="project" value="ComplexPortal"/>
</dbReference>
<dbReference type="GO" id="GO:0005634">
    <property type="term" value="C:nucleus"/>
    <property type="evidence" value="ECO:0000250"/>
    <property type="project" value="UniProtKB"/>
</dbReference>
<dbReference type="GO" id="GO:0048471">
    <property type="term" value="C:perinuclear region of cytoplasm"/>
    <property type="evidence" value="ECO:0007669"/>
    <property type="project" value="UniProtKB-SubCell"/>
</dbReference>
<dbReference type="GO" id="GO:0032777">
    <property type="term" value="C:piccolo histone acetyltransferase complex"/>
    <property type="evidence" value="ECO:0000250"/>
    <property type="project" value="UniProtKB"/>
</dbReference>
<dbReference type="GO" id="GO:0035861">
    <property type="term" value="C:site of double-strand break"/>
    <property type="evidence" value="ECO:0007669"/>
    <property type="project" value="Ensembl"/>
</dbReference>
<dbReference type="GO" id="GO:0000812">
    <property type="term" value="C:Swr1 complex"/>
    <property type="evidence" value="ECO:0000250"/>
    <property type="project" value="UniProtKB"/>
</dbReference>
<dbReference type="GO" id="GO:0005667">
    <property type="term" value="C:transcription regulator complex"/>
    <property type="evidence" value="ECO:0000314"/>
    <property type="project" value="MGI"/>
</dbReference>
<dbReference type="GO" id="GO:0003682">
    <property type="term" value="F:chromatin binding"/>
    <property type="evidence" value="ECO:0000314"/>
    <property type="project" value="UniProtKB"/>
</dbReference>
<dbReference type="GO" id="GO:0140297">
    <property type="term" value="F:DNA-binding transcription factor binding"/>
    <property type="evidence" value="ECO:0007669"/>
    <property type="project" value="Ensembl"/>
</dbReference>
<dbReference type="GO" id="GO:0004402">
    <property type="term" value="F:histone acetyltransferase activity"/>
    <property type="evidence" value="ECO:0000315"/>
    <property type="project" value="UniProtKB"/>
</dbReference>
<dbReference type="GO" id="GO:0043998">
    <property type="term" value="F:histone H2A acetyltransferase activity"/>
    <property type="evidence" value="ECO:0000250"/>
    <property type="project" value="UniProtKB"/>
</dbReference>
<dbReference type="GO" id="GO:0043999">
    <property type="term" value="F:histone H2AK5 acetyltransferase activity"/>
    <property type="evidence" value="ECO:0007669"/>
    <property type="project" value="Ensembl"/>
</dbReference>
<dbReference type="GO" id="GO:0046972">
    <property type="term" value="F:histone H4K16 acetyltransferase activity"/>
    <property type="evidence" value="ECO:0007669"/>
    <property type="project" value="Ensembl"/>
</dbReference>
<dbReference type="GO" id="GO:0106226">
    <property type="term" value="F:peptide 2-hydroxyisobutyryltransferase activity"/>
    <property type="evidence" value="ECO:0007669"/>
    <property type="project" value="RHEA"/>
</dbReference>
<dbReference type="GO" id="GO:0140065">
    <property type="term" value="F:peptide butyryltransferase activity"/>
    <property type="evidence" value="ECO:0000250"/>
    <property type="project" value="UniProtKB"/>
</dbReference>
<dbReference type="GO" id="GO:0140064">
    <property type="term" value="F:peptide crotonyltransferase activity"/>
    <property type="evidence" value="ECO:0000250"/>
    <property type="project" value="UniProtKB"/>
</dbReference>
<dbReference type="GO" id="GO:0120300">
    <property type="term" value="F:peptide lactyltransferase (CoA-dependent) activity"/>
    <property type="evidence" value="ECO:0000250"/>
    <property type="project" value="UniProtKB"/>
</dbReference>
<dbReference type="GO" id="GO:0061733">
    <property type="term" value="F:protein-lysine-acetyltransferase activity"/>
    <property type="evidence" value="ECO:0000314"/>
    <property type="project" value="UniProtKB"/>
</dbReference>
<dbReference type="GO" id="GO:0003713">
    <property type="term" value="F:transcription coactivator activity"/>
    <property type="evidence" value="ECO:0000314"/>
    <property type="project" value="MGI"/>
</dbReference>
<dbReference type="GO" id="GO:0008270">
    <property type="term" value="F:zinc ion binding"/>
    <property type="evidence" value="ECO:0007669"/>
    <property type="project" value="UniProtKB-KW"/>
</dbReference>
<dbReference type="GO" id="GO:0006915">
    <property type="term" value="P:apoptotic process"/>
    <property type="evidence" value="ECO:0000314"/>
    <property type="project" value="MGI"/>
</dbReference>
<dbReference type="GO" id="GO:0071392">
    <property type="term" value="P:cellular response to estradiol stimulus"/>
    <property type="evidence" value="ECO:0007669"/>
    <property type="project" value="Ensembl"/>
</dbReference>
<dbReference type="GO" id="GO:0042149">
    <property type="term" value="P:cellular response to glucose starvation"/>
    <property type="evidence" value="ECO:0000250"/>
    <property type="project" value="UniProtKB"/>
</dbReference>
<dbReference type="GO" id="GO:0071333">
    <property type="term" value="P:cellular response to glucose stimulus"/>
    <property type="evidence" value="ECO:0000315"/>
    <property type="project" value="MGI"/>
</dbReference>
<dbReference type="GO" id="GO:0006974">
    <property type="term" value="P:DNA damage response"/>
    <property type="evidence" value="ECO:0000314"/>
    <property type="project" value="UniProtKB"/>
</dbReference>
<dbReference type="GO" id="GO:0030330">
    <property type="term" value="P:DNA damage response, signal transduction by p53 class mediator"/>
    <property type="evidence" value="ECO:0000250"/>
    <property type="project" value="UniProtKB"/>
</dbReference>
<dbReference type="GO" id="GO:0140861">
    <property type="term" value="P:DNA repair-dependent chromatin remodeling"/>
    <property type="evidence" value="ECO:0007669"/>
    <property type="project" value="Ensembl"/>
</dbReference>
<dbReference type="GO" id="GO:0000724">
    <property type="term" value="P:double-strand break repair via homologous recombination"/>
    <property type="evidence" value="ECO:0000315"/>
    <property type="project" value="UniProtKB"/>
</dbReference>
<dbReference type="GO" id="GO:0000132">
    <property type="term" value="P:establishment of mitotic spindle orientation"/>
    <property type="evidence" value="ECO:0000250"/>
    <property type="project" value="UniProtKB"/>
</dbReference>
<dbReference type="GO" id="GO:0045087">
    <property type="term" value="P:innate immune response"/>
    <property type="evidence" value="ECO:0007669"/>
    <property type="project" value="UniProtKB-KW"/>
</dbReference>
<dbReference type="GO" id="GO:1905691">
    <property type="term" value="P:lipid droplet disassembly"/>
    <property type="evidence" value="ECO:0000250"/>
    <property type="project" value="UniProtKB"/>
</dbReference>
<dbReference type="GO" id="GO:2000042">
    <property type="term" value="P:negative regulation of double-strand break repair via homologous recombination"/>
    <property type="evidence" value="ECO:0007669"/>
    <property type="project" value="Ensembl"/>
</dbReference>
<dbReference type="GO" id="GO:0032703">
    <property type="term" value="P:negative regulation of interleukin-2 production"/>
    <property type="evidence" value="ECO:0007669"/>
    <property type="project" value="Ensembl"/>
</dbReference>
<dbReference type="GO" id="GO:0000122">
    <property type="term" value="P:negative regulation of transcription by RNA polymerase II"/>
    <property type="evidence" value="ECO:0007669"/>
    <property type="project" value="Ensembl"/>
</dbReference>
<dbReference type="GO" id="GO:0021915">
    <property type="term" value="P:neural tube development"/>
    <property type="evidence" value="ECO:0000314"/>
    <property type="project" value="MGI"/>
</dbReference>
<dbReference type="GO" id="GO:0022008">
    <property type="term" value="P:neurogenesis"/>
    <property type="evidence" value="ECO:0000314"/>
    <property type="project" value="MGI"/>
</dbReference>
<dbReference type="GO" id="GO:0006289">
    <property type="term" value="P:nucleotide-excision repair"/>
    <property type="evidence" value="ECO:0000250"/>
    <property type="project" value="UniProtKB"/>
</dbReference>
<dbReference type="GO" id="GO:0018394">
    <property type="term" value="P:peptidyl-lysine acetylation"/>
    <property type="evidence" value="ECO:0000314"/>
    <property type="project" value="UniProtKB"/>
</dbReference>
<dbReference type="GO" id="GO:1905337">
    <property type="term" value="P:positive regulation of aggrephagy"/>
    <property type="evidence" value="ECO:0007669"/>
    <property type="project" value="Ensembl"/>
</dbReference>
<dbReference type="GO" id="GO:1902425">
    <property type="term" value="P:positive regulation of attachment of mitotic spindle microtubules to kinetochore"/>
    <property type="evidence" value="ECO:0000250"/>
    <property type="project" value="UniProtKB"/>
</dbReference>
<dbReference type="GO" id="GO:0010508">
    <property type="term" value="P:positive regulation of autophagy"/>
    <property type="evidence" value="ECO:0000314"/>
    <property type="project" value="UniProtKB"/>
</dbReference>
<dbReference type="GO" id="GO:0042753">
    <property type="term" value="P:positive regulation of circadian rhythm"/>
    <property type="evidence" value="ECO:0000314"/>
    <property type="project" value="UniProtKB"/>
</dbReference>
<dbReference type="GO" id="GO:0045893">
    <property type="term" value="P:positive regulation of DNA-templated transcription"/>
    <property type="evidence" value="ECO:0000250"/>
    <property type="project" value="UniProtKB"/>
</dbReference>
<dbReference type="GO" id="GO:1905168">
    <property type="term" value="P:positive regulation of double-strand break repair via homologous recombination"/>
    <property type="evidence" value="ECO:0000250"/>
    <property type="project" value="UniProtKB"/>
</dbReference>
<dbReference type="GO" id="GO:0062033">
    <property type="term" value="P:positive regulation of mitotic sister chromatid segregation"/>
    <property type="evidence" value="ECO:0000250"/>
    <property type="project" value="UniProtKB"/>
</dbReference>
<dbReference type="GO" id="GO:0045663">
    <property type="term" value="P:positive regulation of myoblast differentiation"/>
    <property type="evidence" value="ECO:0000250"/>
    <property type="project" value="UniProtKB"/>
</dbReference>
<dbReference type="GO" id="GO:0045591">
    <property type="term" value="P:positive regulation of regulatory T cell differentiation"/>
    <property type="evidence" value="ECO:0000315"/>
    <property type="project" value="UniProtKB"/>
</dbReference>
<dbReference type="GO" id="GO:0045944">
    <property type="term" value="P:positive regulation of transcription by RNA polymerase II"/>
    <property type="evidence" value="ECO:0000316"/>
    <property type="project" value="MGI"/>
</dbReference>
<dbReference type="GO" id="GO:0010867">
    <property type="term" value="P:positive regulation of triglyceride biosynthetic process"/>
    <property type="evidence" value="ECO:0000250"/>
    <property type="project" value="UniProtKB"/>
</dbReference>
<dbReference type="GO" id="GO:0043161">
    <property type="term" value="P:proteasome-mediated ubiquitin-dependent protein catabolic process"/>
    <property type="evidence" value="ECO:0007669"/>
    <property type="project" value="Ensembl"/>
</dbReference>
<dbReference type="GO" id="GO:0042981">
    <property type="term" value="P:regulation of apoptotic process"/>
    <property type="evidence" value="ECO:0000303"/>
    <property type="project" value="ComplexPortal"/>
</dbReference>
<dbReference type="GO" id="GO:0051726">
    <property type="term" value="P:regulation of cell cycle"/>
    <property type="evidence" value="ECO:0000266"/>
    <property type="project" value="ComplexPortal"/>
</dbReference>
<dbReference type="GO" id="GO:1902275">
    <property type="term" value="P:regulation of chromatin organization"/>
    <property type="evidence" value="ECO:0000303"/>
    <property type="project" value="ComplexPortal"/>
</dbReference>
<dbReference type="GO" id="GO:2000779">
    <property type="term" value="P:regulation of double-strand break repair"/>
    <property type="evidence" value="ECO:0000303"/>
    <property type="project" value="ComplexPortal"/>
</dbReference>
<dbReference type="GO" id="GO:1902036">
    <property type="term" value="P:regulation of hematopoietic stem cell differentiation"/>
    <property type="evidence" value="ECO:0000315"/>
    <property type="project" value="UniProtKB"/>
</dbReference>
<dbReference type="GO" id="GO:0006357">
    <property type="term" value="P:regulation of transcription by RNA polymerase II"/>
    <property type="evidence" value="ECO:0000314"/>
    <property type="project" value="MGI"/>
</dbReference>
<dbReference type="GO" id="GO:0010212">
    <property type="term" value="P:response to ionizing radiation"/>
    <property type="evidence" value="ECO:0007669"/>
    <property type="project" value="Ensembl"/>
</dbReference>
<dbReference type="GO" id="GO:0035092">
    <property type="term" value="P:sperm DNA condensation"/>
    <property type="evidence" value="ECO:0000315"/>
    <property type="project" value="UniProtKB"/>
</dbReference>
<dbReference type="GO" id="GO:0007286">
    <property type="term" value="P:spermatid development"/>
    <property type="evidence" value="ECO:0000315"/>
    <property type="project" value="UniProtKB"/>
</dbReference>
<dbReference type="CDD" id="cd18985">
    <property type="entry name" value="CBD_TIP60_like"/>
    <property type="match status" value="1"/>
</dbReference>
<dbReference type="CDD" id="cd04301">
    <property type="entry name" value="NAT_SF"/>
    <property type="match status" value="1"/>
</dbReference>
<dbReference type="FunFam" id="1.10.10.10:FF:000022">
    <property type="entry name" value="Histone acetyltransferase"/>
    <property type="match status" value="1"/>
</dbReference>
<dbReference type="FunFam" id="2.30.30.140:FF:000013">
    <property type="entry name" value="Histone acetyltransferase"/>
    <property type="match status" value="1"/>
</dbReference>
<dbReference type="FunFam" id="3.30.60.60:FF:000001">
    <property type="entry name" value="Histone acetyltransferase"/>
    <property type="match status" value="1"/>
</dbReference>
<dbReference type="FunFam" id="3.40.630.30:FF:000002">
    <property type="entry name" value="Histone acetyltransferase"/>
    <property type="match status" value="1"/>
</dbReference>
<dbReference type="Gene3D" id="2.30.30.140">
    <property type="match status" value="1"/>
</dbReference>
<dbReference type="Gene3D" id="3.40.630.30">
    <property type="match status" value="1"/>
</dbReference>
<dbReference type="Gene3D" id="3.30.60.60">
    <property type="entry name" value="N-acetyl transferase-like"/>
    <property type="match status" value="1"/>
</dbReference>
<dbReference type="Gene3D" id="1.10.10.10">
    <property type="entry name" value="Winged helix-like DNA-binding domain superfamily/Winged helix DNA-binding domain"/>
    <property type="match status" value="1"/>
</dbReference>
<dbReference type="InterPro" id="IPR016181">
    <property type="entry name" value="Acyl_CoA_acyltransferase"/>
</dbReference>
<dbReference type="InterPro" id="IPR016197">
    <property type="entry name" value="Chromo-like_dom_sf"/>
</dbReference>
<dbReference type="InterPro" id="IPR000953">
    <property type="entry name" value="Chromo/chromo_shadow_dom"/>
</dbReference>
<dbReference type="InterPro" id="IPR002717">
    <property type="entry name" value="HAT_MYST-type"/>
</dbReference>
<dbReference type="InterPro" id="IPR050603">
    <property type="entry name" value="MYST_HAT"/>
</dbReference>
<dbReference type="InterPro" id="IPR025995">
    <property type="entry name" value="Tudor-knot"/>
</dbReference>
<dbReference type="InterPro" id="IPR036388">
    <property type="entry name" value="WH-like_DNA-bd_sf"/>
</dbReference>
<dbReference type="InterPro" id="IPR040706">
    <property type="entry name" value="Zf-MYST"/>
</dbReference>
<dbReference type="PANTHER" id="PTHR10615">
    <property type="entry name" value="HISTONE ACETYLTRANSFERASE"/>
    <property type="match status" value="1"/>
</dbReference>
<dbReference type="PANTHER" id="PTHR10615:SF219">
    <property type="entry name" value="HISTONE ACETYLTRANSFERASE KAT5"/>
    <property type="match status" value="1"/>
</dbReference>
<dbReference type="Pfam" id="PF01853">
    <property type="entry name" value="MOZ_SAS"/>
    <property type="match status" value="1"/>
</dbReference>
<dbReference type="Pfam" id="PF11717">
    <property type="entry name" value="Tudor-knot"/>
    <property type="match status" value="1"/>
</dbReference>
<dbReference type="Pfam" id="PF17772">
    <property type="entry name" value="zf-MYST"/>
    <property type="match status" value="1"/>
</dbReference>
<dbReference type="SMART" id="SM00298">
    <property type="entry name" value="CHROMO"/>
    <property type="match status" value="1"/>
</dbReference>
<dbReference type="SUPFAM" id="SSF55729">
    <property type="entry name" value="Acyl-CoA N-acyltransferases (Nat)"/>
    <property type="match status" value="1"/>
</dbReference>
<dbReference type="SUPFAM" id="SSF54160">
    <property type="entry name" value="Chromo domain-like"/>
    <property type="match status" value="1"/>
</dbReference>
<dbReference type="PROSITE" id="PS51726">
    <property type="entry name" value="MYST_HAT"/>
    <property type="match status" value="1"/>
</dbReference>
<reference key="1">
    <citation type="journal article" date="2002" name="Gene">
        <title>Characterization and expression of the mouse tat interactive protein 60 kD (TIP60) gene.</title>
        <authorList>
            <person name="McAllister D."/>
            <person name="Merlo X."/>
            <person name="Lough J.W."/>
        </authorList>
    </citation>
    <scope>NUCLEOTIDE SEQUENCE [GENOMIC DNA] (ISOFORM 1)</scope>
    <scope>SUBCELLULAR LOCATION</scope>
    <scope>TISSUE SPECIFICITY</scope>
    <source>
        <strain>129/SvJ</strain>
    </source>
</reference>
<reference key="2">
    <citation type="journal article" date="2003" name="Gene">
        <title>Identification of a larger form of the histone acetyl transferase Tip60.</title>
        <authorList>
            <person name="Legube G."/>
            <person name="Trouche D."/>
        </authorList>
    </citation>
    <scope>NUCLEOTIDE SEQUENCE [MRNA] (ISOFORM 3)</scope>
</reference>
<reference key="3">
    <citation type="submission" date="2002-07" db="EMBL/GenBank/DDBJ databases">
        <title>Cloning of mouse Tip60.</title>
        <authorList>
            <person name="Szendro P.I."/>
            <person name="Cadenas C."/>
            <person name="Eichele G."/>
        </authorList>
    </citation>
    <scope>NUCLEOTIDE SEQUENCE [MRNA] (ISOFORMS 1 AND 2)</scope>
    <source>
        <strain>C57BL/6J</strain>
    </source>
</reference>
<reference key="4">
    <citation type="journal article" date="2006" name="J. Biol. Chem.">
        <title>Co-activation of atrial natriuretic factor promoter by Tip60 and serum response factor.</title>
        <authorList>
            <person name="Kim M.S."/>
            <person name="Merlo X."/>
            <person name="Wilson C."/>
            <person name="Lough J."/>
        </authorList>
    </citation>
    <scope>NUCLEOTIDE SEQUENCE [MRNA] (ISOFORM 5)</scope>
    <scope>INTERACTION WITH SRF</scope>
</reference>
<reference key="5">
    <citation type="submission" date="2001-02" db="EMBL/GenBank/DDBJ databases">
        <title>Isolation and characterization of novel human and mouse genes, which are expressed in the digestive tract.</title>
        <authorList>
            <person name="Daigo Y."/>
            <person name="Takayama I."/>
            <person name="Fujino M.A."/>
        </authorList>
    </citation>
    <scope>NUCLEOTIDE SEQUENCE [MRNA] (ISOFORM 4)</scope>
    <source>
        <strain>W/Wv</strain>
    </source>
</reference>
<reference key="6">
    <citation type="journal article" date="2009" name="PLoS Biol.">
        <title>Lineage-specific biology revealed by a finished genome assembly of the mouse.</title>
        <authorList>
            <person name="Church D.M."/>
            <person name="Goodstadt L."/>
            <person name="Hillier L.W."/>
            <person name="Zody M.C."/>
            <person name="Goldstein S."/>
            <person name="She X."/>
            <person name="Bult C.J."/>
            <person name="Agarwala R."/>
            <person name="Cherry J.L."/>
            <person name="DiCuccio M."/>
            <person name="Hlavina W."/>
            <person name="Kapustin Y."/>
            <person name="Meric P."/>
            <person name="Maglott D."/>
            <person name="Birtle Z."/>
            <person name="Marques A.C."/>
            <person name="Graves T."/>
            <person name="Zhou S."/>
            <person name="Teague B."/>
            <person name="Potamousis K."/>
            <person name="Churas C."/>
            <person name="Place M."/>
            <person name="Herschleb J."/>
            <person name="Runnheim R."/>
            <person name="Forrest D."/>
            <person name="Amos-Landgraf J."/>
            <person name="Schwartz D.C."/>
            <person name="Cheng Z."/>
            <person name="Lindblad-Toh K."/>
            <person name="Eichler E.E."/>
            <person name="Ponting C.P."/>
        </authorList>
    </citation>
    <scope>NUCLEOTIDE SEQUENCE [LARGE SCALE GENOMIC DNA]</scope>
    <source>
        <strain>C57BL/6J</strain>
    </source>
</reference>
<reference key="7">
    <citation type="journal article" date="2004" name="Genome Res.">
        <title>The status, quality, and expansion of the NIH full-length cDNA project: the Mammalian Gene Collection (MGC).</title>
        <authorList>
            <consortium name="The MGC Project Team"/>
        </authorList>
    </citation>
    <scope>NUCLEOTIDE SEQUENCE [LARGE SCALE MRNA] (ISOFORMS 2 AND 5)</scope>
</reference>
<reference key="8">
    <citation type="journal article" date="2007" name="Nature">
        <title>Tip60 is a haplo-insufficient tumour suppressor required for an oncogene-induced DNA damage response.</title>
        <authorList>
            <person name="Gorrini C."/>
            <person name="Squatrito M."/>
            <person name="Luise C."/>
            <person name="Syed N."/>
            <person name="Perna D."/>
            <person name="Wark L."/>
            <person name="Martinato F."/>
            <person name="Sardella D."/>
            <person name="Verrecchia A."/>
            <person name="Bennett S."/>
            <person name="Confalonieri S."/>
            <person name="Cesaroni M."/>
            <person name="Marchesi F."/>
            <person name="Gasco M."/>
            <person name="Scanziani E."/>
            <person name="Capra M."/>
            <person name="Mai S."/>
            <person name="Nuciforo P."/>
            <person name="Crook T."/>
            <person name="Lough J."/>
            <person name="Amati B."/>
        </authorList>
    </citation>
    <scope>FUNCTION</scope>
    <scope>CATALYTIC ACTIVITY</scope>
</reference>
<reference key="9">
    <citation type="journal article" date="2009" name="Science">
        <title>Eos mediates Foxp3-dependent gene silencing in CD4+ regulatory T cells.</title>
        <authorList>
            <person name="Pan F."/>
            <person name="Yu H."/>
            <person name="Dang E.V."/>
            <person name="Barbi J."/>
            <person name="Pan X."/>
            <person name="Grosso J.F."/>
            <person name="Jinasena D."/>
            <person name="Sharma S.M."/>
            <person name="McCadden E.M."/>
            <person name="Getnet D."/>
            <person name="Drake C.G."/>
            <person name="Liu J.O."/>
            <person name="Ostrowski M.C."/>
            <person name="Pardoll D.M."/>
        </authorList>
    </citation>
    <scope>INTERACTION WITH FOXP3</scope>
</reference>
<reference key="10">
    <citation type="journal article" date="2010" name="Cell">
        <title>A tissue-specific atlas of mouse protein phosphorylation and expression.</title>
        <authorList>
            <person name="Huttlin E.L."/>
            <person name="Jedrychowski M.P."/>
            <person name="Elias J.E."/>
            <person name="Goswami T."/>
            <person name="Rad R."/>
            <person name="Beausoleil S.A."/>
            <person name="Villen J."/>
            <person name="Haas W."/>
            <person name="Sowa M.E."/>
            <person name="Gygi S.P."/>
        </authorList>
    </citation>
    <scope>PHOSPHORYLATION [LARGE SCALE ANALYSIS] AT SER-199</scope>
    <scope>IDENTIFICATION BY MASS SPECTROMETRY [LARGE SCALE ANALYSIS]</scope>
    <source>
        <tissue>Kidney</tissue>
        <tissue>Testis</tissue>
    </source>
</reference>
<reference key="11">
    <citation type="journal article" date="2012" name="Science">
        <title>GSK3-TIP60-ULK1 signaling pathway links growth factor deprivation to autophagy.</title>
        <authorList>
            <person name="Lin S.Y."/>
            <person name="Li T.Y."/>
            <person name="Liu Q."/>
            <person name="Zhang C."/>
            <person name="Li X."/>
            <person name="Chen Y."/>
            <person name="Zhang S.M."/>
            <person name="Lian G."/>
            <person name="Liu Q."/>
            <person name="Ruan K."/>
            <person name="Wang Z."/>
            <person name="Zhang C.S."/>
            <person name="Chien K.Y."/>
            <person name="Wu J."/>
            <person name="Li Q."/>
            <person name="Han J."/>
            <person name="Lin S.C."/>
        </authorList>
    </citation>
    <scope>FUNCTION</scope>
    <scope>CATALYTIC ACTIVITY</scope>
    <scope>ACTIVITY REGULATION</scope>
    <scope>PHOSPHORYLATION AT SER-86</scope>
    <scope>MUTAGENESIS OF SER-86</scope>
</reference>
<reference key="12">
    <citation type="journal article" date="2014" name="Cell Rep.">
        <title>Dynamic interactions between TIP60 and p300 regulate FOXP3 function through a structural switch defined by a single lysine on TIP60.</title>
        <authorList>
            <person name="Xiao Y."/>
            <person name="Nagai Y."/>
            <person name="Deng G."/>
            <person name="Ohtani T."/>
            <person name="Zhu Z."/>
            <person name="Zhou Z."/>
            <person name="Zhang H."/>
            <person name="Ji M.Q."/>
            <person name="Lough J.W."/>
            <person name="Samanta A."/>
            <person name="Hancock W.W."/>
            <person name="Greene M.I."/>
        </authorList>
    </citation>
    <scope>FUNCTION</scope>
</reference>
<reference key="13">
    <citation type="journal article" date="2015" name="Cell Death Dis.">
        <title>KAT5-mediated SOX4 acetylation orchestrates chromatin remodeling during myoblast differentiation.</title>
        <authorList>
            <person name="Jang S.M."/>
            <person name="Kim J.W."/>
            <person name="Kim C.H."/>
            <person name="An J.H."/>
            <person name="Johnson A."/>
            <person name="Song P.I."/>
            <person name="Rhee S."/>
            <person name="Choi K.H."/>
        </authorList>
    </citation>
    <scope>FUNCTION</scope>
</reference>
<reference key="14">
    <citation type="journal article" date="2017" name="Mol. Cell. Biol.">
        <title>EPC1/TIP60-mediated histone acetylation facilitates spermiogenesis in mice.</title>
        <authorList>
            <person name="Dong Y."/>
            <person name="Isono K.I."/>
            <person name="Ohbo K."/>
            <person name="Endo T.A."/>
            <person name="Ohara O."/>
            <person name="Maekawa M."/>
            <person name="Toyama Y."/>
            <person name="Ito C."/>
            <person name="Toshimori K."/>
            <person name="Helin K."/>
            <person name="Ogonuki N."/>
            <person name="Inoue K."/>
            <person name="Ogura A."/>
            <person name="Yamagata K."/>
            <person name="Kitabayashi I."/>
            <person name="Koseki H."/>
        </authorList>
    </citation>
    <scope>FUNCTION</scope>
    <scope>SUBCELLULAR LOCATION</scope>
    <scope>DISRUPTION PHENOTYPE</scope>
</reference>
<reference key="15">
    <citation type="journal article" date="2018" name="Nat. Commun.">
        <title>Tip60-mediated lipin 1 acetylation and ER translocation determine triacylglycerol synthesis rate.</title>
        <authorList>
            <person name="Li T.Y."/>
            <person name="Song L."/>
            <person name="Sun Y."/>
            <person name="Li J."/>
            <person name="Yi C."/>
            <person name="Lam S.M."/>
            <person name="Xu D."/>
            <person name="Zhou L."/>
            <person name="Li X."/>
            <person name="Yang Y."/>
            <person name="Zhang C.S."/>
            <person name="Xie C."/>
            <person name="Huang X."/>
            <person name="Shui G."/>
            <person name="Lin S.Y."/>
            <person name="Reue K."/>
            <person name="Lin S.C."/>
        </authorList>
    </citation>
    <scope>FUNCTION</scope>
    <scope>CATALYTIC ACTIVITY</scope>
    <scope>PHOSPHORYLATION AT SER-86</scope>
    <scope>MUTAGENESIS OF SER-86</scope>
</reference>
<reference key="16">
    <citation type="journal article" date="2018" name="Sci. Rep.">
        <title>TIP55, a splice isoform of the KAT5 acetyltransferase, is essential for developmental gene regulation and organogenesis.</title>
        <authorList>
            <person name="Acharya D."/>
            <person name="Nera B."/>
            <person name="Milstone Z.J."/>
            <person name="Bourke L."/>
            <person name="Yoon Y."/>
            <person name="Rivera-Perez J.A."/>
            <person name="Trivedi C.M."/>
            <person name="Fazzio T.G."/>
        </authorList>
    </citation>
    <scope>DISRUPTION PHENOTYPE (ISOFORM 5)</scope>
</reference>
<reference key="17">
    <citation type="journal article" date="2019" name="Elife">
        <title>Acetylation of BMAL1 by TIP60 controls BRD4-P-TEFb recruitment to circadian promoters.</title>
        <authorList>
            <person name="Petkau N."/>
            <person name="Budak H."/>
            <person name="Zhou X."/>
            <person name="Oster H."/>
            <person name="Eichele G."/>
        </authorList>
    </citation>
    <scope>FUNCTION</scope>
    <scope>CATALYTIC ACTIVITY</scope>
</reference>
<reference key="18">
    <citation type="journal article" date="2019" name="Mol. Cell. Biol.">
        <title>Phosphorylation of TIP60 Suppresses 53BP1 Localization at DNA Damage Sites.</title>
        <authorList>
            <person name="Li M.L."/>
            <person name="Jiang Q."/>
            <person name="Bhanu N.V."/>
            <person name="Wu J."/>
            <person name="Li W."/>
            <person name="Garcia B.A."/>
            <person name="Greenberg R.A."/>
        </authorList>
    </citation>
    <scope>FUNCTION</scope>
    <scope>DISRUPTION PHENOTYPE</scope>
    <scope>PHOSPHORYLATION AT SER-86 AND SER-90</scope>
    <scope>MUTAGENESIS OF SER-86 AND SER-90</scope>
</reference>
<reference key="19">
    <citation type="journal article" date="2020" name="Blood">
        <title>Lysine acetyltransferase Tip60 is required for hematopoietic stem cell maintenance.</title>
        <authorList>
            <person name="Numata A."/>
            <person name="Kwok H.S."/>
            <person name="Zhou Q.L."/>
            <person name="Li J."/>
            <person name="Tirado-Magallanes R."/>
            <person name="Angarica V.E."/>
            <person name="Hannah R."/>
            <person name="Park J."/>
            <person name="Wang C.Q."/>
            <person name="Krishnan V."/>
            <person name="Rajagopalan D."/>
            <person name="Zhang Y."/>
            <person name="Zhou S."/>
            <person name="Welner R.S."/>
            <person name="Osato M."/>
            <person name="Jha S."/>
            <person name="Bohlander S.K."/>
            <person name="Goettgens B."/>
            <person name="Yang H."/>
            <person name="Benoukraf T."/>
            <person name="Lough J.W."/>
            <person name="Bararia D."/>
            <person name="Tenen D.G."/>
        </authorList>
    </citation>
    <scope>FUNCTION</scope>
    <scope>CATALYTIC ACTIVITY</scope>
    <scope>IDENTIFICATION IN NUA4 COMPLEX</scope>
    <scope>DISRUPTION PHENOTYPE</scope>
    <scope>MUTAGENESIS OF 377-GLN--GLY-380</scope>
</reference>
<reference key="20">
    <citation type="journal article" date="2020" name="Cancers">
        <title>VRK1 phosphorylates Tip60/KAT5 and is required for H4K16 acetylation in response to DNA Damage.</title>
        <authorList>
            <person name="Garcia-Gonzalez R."/>
            <person name="Morejon-Garcia P."/>
            <person name="Campillo-Marcos I."/>
            <person name="Salzano M."/>
            <person name="Lazo P.A."/>
        </authorList>
    </citation>
    <scope>PHOSPHORYLATION</scope>
</reference>
<reference key="21">
    <citation type="journal article" date="2020" name="Proc. Natl. Acad. Sci. U.S.A.">
        <title>KAT5 acetylates cGAS to promote innate immune response to DNA virus.</title>
        <authorList>
            <person name="Song Z.M."/>
            <person name="Lin H."/>
            <person name="Yi X.M."/>
            <person name="Guo W."/>
            <person name="Hu M.M."/>
            <person name="Shu H.B."/>
        </authorList>
    </citation>
    <scope>MUTAGENESIS OF SER-86</scope>
</reference>
<reference key="22">
    <citation type="journal article" date="2021" name="Nat. Chem. Biol.">
        <title>Dynamic crotonylation of EB1 by TIP60 ensures accurate spindle positioning in mitosis.</title>
        <authorList>
            <person name="Song X."/>
            <person name="Yang F."/>
            <person name="Liu X."/>
            <person name="Xia P."/>
            <person name="Yin W."/>
            <person name="Wang Z."/>
            <person name="Wang Y."/>
            <person name="Yuan X."/>
            <person name="Dou Z."/>
            <person name="Jiang K."/>
            <person name="Ma M."/>
            <person name="Hu B."/>
            <person name="Zhang R."/>
            <person name="Xu C."/>
            <person name="Zhang Z."/>
            <person name="Ruan K."/>
            <person name="Tian R."/>
            <person name="Li L."/>
            <person name="Liu T."/>
            <person name="Hill D.L."/>
            <person name="Zang J."/>
            <person name="Liu X."/>
            <person name="Li J."/>
            <person name="Cheng J."/>
            <person name="Yao X."/>
        </authorList>
    </citation>
    <scope>PHOSPHORYLATION AT SER-90</scope>
    <scope>MUTAGENESIS OF SER-90</scope>
</reference>
<comment type="function">
    <text evidence="1 8 10 11 12 13 14 15 17 18">Catalytic subunit of the NuA4 histone acetyltransferase complex, a multiprotein complex involved in transcriptional activation of select genes principally by acetylation of nucleosomal histones H2A and H4 (PubMed:28694333, PubMed:30297459, PubMed:32542325). Histone acetylation alters nucleosome-DNA interactions and promotes interaction of the modified histones with other proteins which positively regulate transcription (By similarity). The NuA4 histone acetyltransferase complex is required for the activation of transcriptional programs associated with proto-oncogene mediated growth induction, tumor suppressor mediated growth arrest and replicative senescence, apoptosis, and DNA repair (PubMed:17728759). The NuA4 complex plays a direct role in repair of DNA double-strand breaks (DSBs) by promoting homologous recombination (HR): the complex inhibits TP53BP1 binding to chromatin via MBTD1, which recognizes and binds histone H4 trimethylated at 'Lys-20' (H4K20me), and KAT5 that catalyzes acetylation of 'Lys-15' of histone H2A (H2AK15ac), thereby blocking the ubiquitination mark required for TP53BP1 localization at DNA breaks (PubMed:30297459). Also involved in DSB repair by mediating acetylation of 'Lys-5' of histone H2AX (H2AXK5ac), promoting NBN/NBS1 assembly at the sites of DNA damage (By similarity). The NuA4 complex plays a key role in hematopoietic stem cell maintenance and is required to maintain acetylated H2A.Z/H2AZ1 at MYC target genes (PubMed:32542325). The NuA4 complex is also required for spermatid development by promoting acetylation of histones: histone hyperacetylation is required for histone replacement during the transition from round to elongating spermatids (PubMed:28694333). Component of a SWR1-like complex that specifically mediates the removal of histone H2A.Z/H2AZ1 from the nucleosome (By similarity). Also acetylates non-histone proteins, such as BMAL1, ATM, AURKB, CHKA, CGAS, ERCC4/XPF, LPIN1, TP53/p53, NDC80/HEC1, NR1D2, RAN, SOX4, FOXP3, SQSTM1, ULK1 and RUBCNL/Pacer (PubMed:22539723, PubMed:24835996, PubMed:31294688). Directly acetylates and activates ATM (By similarity). Promotes nucleotide excision repair (NER) by mediating acetylation of ERCC4/XPF, thereby promoting formation of the ERCC4-ERCC1 complex (By similarity). Relieves NR1D2-mediated inhibition of APOC3 expression by acetylating NR1D2 (By similarity). Acts as a regulator of regulatory T-cells (Treg) by catalyzing FOXP3 acetylation, thereby promoting FOXP3 transcriptional repressor activity (PubMed:24835996). Involved in skeletal myoblast differentiation by mediating acetylation of SOX4 (PubMed:26291311). Catalyzes acetylation of APBB1/FE65, increasing its transcription activator activity (By similarity). Promotes transcription elongation during the activation phase of the circadian cycle by catalyzing acetylation of BMAL1, promoting elongation of circadian transcripts (PubMed:31294688). Together with GSK3 (GSK3A or GSK3B), acts as a regulator of autophagy: phosphorylated at Ser-86 by GSK3 under starvation conditions, leading to activate acetyltransferase activity and promote acetylation of key autophagy regulators, such as ULK1 and RUBCNL/Pacer (PubMed:22539723). Acts as a regulator of the cGAS-STING innate antiviral response by catalyzing acetylation the N-terminus of CGAS, thereby promoting CGAS DNA-binding and activation (By similarity). Also regulates lipid metabolism by mediating acetylation of CHKA or LPIN1 (PubMed:29765047). Promotes lipolysis of lipid droplets following glucose deprivation by mediating acetylation of isoform 1 of CHKA, thereby promoting monomerization of CHKA and its conversion into a tyrosine-protein kinase (By similarity). Acts as a regulator of fatty-acid-induced triacylglycerol synthesis by catalyzing acetylation of LPIN1, thereby promoting the synthesis of diacylglycerol (PubMed:29765047). In addition to protein acetyltransferase, can use different acyl-CoA substrates, such as (2E)-butenoyl-CoA (crotonyl-CoA), S-lactoyl-CoA (lactyl-CoA) and 2-hydroxyisobutanoyl-CoA (2-hydroxyisobutyryl-CoA), and is able to mediate protein crotonylation, lactylation and 2-hydroxyisobutyrylation, respectively (By similarity). Acts as a key regulator of chromosome segregation and kinetochore-microtubule attachment during mitosis by mediating acetylation or crotonylation of target proteins (By similarity). Catalyzes acetylation of AURKB at kinetochores, increasing AURKB activity and promoting accurate chromosome segregation in mitosis (By similarity). Acetylates RAN during mitosis, promoting microtubule assembly at mitotic chromosomes (By similarity). Acetylates NDC80/HEC1 during mitosis, promoting robust kinetochore-microtubule attachment (By similarity). Catalyzes crotonylation of MAPRE1/EB1, thereby ensuring accurate spindle positioning in mitosis (By similarity). Catalyzes lactylation of NBN/NBS1 in response to DNA damage, thereby promoting DNA double-strand breaks (DSBs) via homologous recombination (HR) (By similarity).</text>
</comment>
<comment type="catalytic activity">
    <reaction evidence="30">
        <text>L-lysyl-[histone] + acetyl-CoA = N(6)-acetyl-L-lysyl-[histone] + CoA + H(+)</text>
        <dbReference type="Rhea" id="RHEA:21992"/>
        <dbReference type="Rhea" id="RHEA-COMP:9845"/>
        <dbReference type="Rhea" id="RHEA-COMP:11338"/>
        <dbReference type="ChEBI" id="CHEBI:15378"/>
        <dbReference type="ChEBI" id="CHEBI:29969"/>
        <dbReference type="ChEBI" id="CHEBI:57287"/>
        <dbReference type="ChEBI" id="CHEBI:57288"/>
        <dbReference type="ChEBI" id="CHEBI:61930"/>
        <dbReference type="EC" id="2.3.1.48"/>
    </reaction>
    <physiologicalReaction direction="left-to-right" evidence="30">
        <dbReference type="Rhea" id="RHEA:21993"/>
    </physiologicalReaction>
</comment>
<comment type="catalytic activity">
    <reaction evidence="10 14 17">
        <text>L-lysyl-[protein] + acetyl-CoA = N(6)-acetyl-L-lysyl-[protein] + CoA + H(+)</text>
        <dbReference type="Rhea" id="RHEA:45948"/>
        <dbReference type="Rhea" id="RHEA-COMP:9752"/>
        <dbReference type="Rhea" id="RHEA-COMP:10731"/>
        <dbReference type="ChEBI" id="CHEBI:15378"/>
        <dbReference type="ChEBI" id="CHEBI:29969"/>
        <dbReference type="ChEBI" id="CHEBI:57287"/>
        <dbReference type="ChEBI" id="CHEBI:57288"/>
        <dbReference type="ChEBI" id="CHEBI:61930"/>
        <dbReference type="EC" id="2.3.1.48"/>
    </reaction>
    <physiologicalReaction direction="left-to-right" evidence="10 14 17">
        <dbReference type="Rhea" id="RHEA:45949"/>
    </physiologicalReaction>
</comment>
<comment type="catalytic activity">
    <reaction evidence="1">
        <text>(2E)-butenoyl-CoA + L-lysyl-[protein] = N(6)-(2E)-butenoyl-L-lysyl-[protein] + CoA + H(+)</text>
        <dbReference type="Rhea" id="RHEA:53908"/>
        <dbReference type="Rhea" id="RHEA-COMP:9752"/>
        <dbReference type="Rhea" id="RHEA-COMP:13707"/>
        <dbReference type="ChEBI" id="CHEBI:15378"/>
        <dbReference type="ChEBI" id="CHEBI:29969"/>
        <dbReference type="ChEBI" id="CHEBI:57287"/>
        <dbReference type="ChEBI" id="CHEBI:57332"/>
        <dbReference type="ChEBI" id="CHEBI:137954"/>
    </reaction>
    <physiologicalReaction direction="left-to-right" evidence="1">
        <dbReference type="Rhea" id="RHEA:53909"/>
    </physiologicalReaction>
</comment>
<comment type="catalytic activity">
    <reaction evidence="1">
        <text>2-hydroxyisobutanoyl-CoA + L-lysyl-[protein] = N(6)-(2-hydroxyisobutanoyl)-L-lysyl-[protein] + CoA + H(+)</text>
        <dbReference type="Rhea" id="RHEA:24180"/>
        <dbReference type="Rhea" id="RHEA-COMP:9752"/>
        <dbReference type="Rhea" id="RHEA-COMP:15921"/>
        <dbReference type="ChEBI" id="CHEBI:15378"/>
        <dbReference type="ChEBI" id="CHEBI:29969"/>
        <dbReference type="ChEBI" id="CHEBI:57287"/>
        <dbReference type="ChEBI" id="CHEBI:131780"/>
        <dbReference type="ChEBI" id="CHEBI:144968"/>
    </reaction>
    <physiologicalReaction direction="left-to-right" evidence="1">
        <dbReference type="Rhea" id="RHEA:24181"/>
    </physiologicalReaction>
</comment>
<comment type="catalytic activity">
    <reaction evidence="1">
        <text>(S)-lactoyl-CoA + L-lysyl-[protein] = N(6)-[(S)-lactoyl]-L-lysyl-[protein] + CoA + H(+)</text>
        <dbReference type="Rhea" id="RHEA:61996"/>
        <dbReference type="Rhea" id="RHEA-COMP:9752"/>
        <dbReference type="Rhea" id="RHEA-COMP:19466"/>
        <dbReference type="ChEBI" id="CHEBI:15378"/>
        <dbReference type="ChEBI" id="CHEBI:29969"/>
        <dbReference type="ChEBI" id="CHEBI:57287"/>
        <dbReference type="ChEBI" id="CHEBI:231527"/>
        <dbReference type="ChEBI" id="CHEBI:231528"/>
    </reaction>
    <physiologicalReaction direction="left-to-right" evidence="1">
        <dbReference type="Rhea" id="RHEA:61997"/>
    </physiologicalReaction>
</comment>
<comment type="activity regulation">
    <text evidence="2 10">Acyltransferase and acetyltransferase activities are activated by phosphorylation and autoacetylation (PubMed:22539723). Autoacetylation activates the histone acetyltransferase activity (By similarity).</text>
</comment>
<comment type="subunit">
    <text evidence="1 7 9 18">Component of the NuA4 histone acetyltransferase complex which contains the catalytic subunit KAT5/TIP60 and the subunits EP400, TRRAP/PAF400, BRD8/SMAP, EPC1, DMAP1/DNMAP1, RUVBL1/TIP49, RUVBL2, ING3, actin, ACTL6A/BAF53A, MORF4L1/MRG15, MORF4L2/MRGX, MRGBP, YEATS4/GAS41, VPS72/YL1 and MEAF6 (PubMed:32542325). KAT5/TIP60, EPC1, and ING3 together constitute a minimal HAT complex termed Piccolo NuA4 (By similarity). The NuA4 complex interacts with MYC (By similarity). Interacts with ATM (By similarity). Interacts with JADE1 (By similarity). Interacts with PLA2G4A/CPLA2, EDNRA and HDAC7 (By similarity). Interacts with the cytoplasmic tail of APP and APBB1/FE65 (By similarity). Interacts with TRIM24 and TRIM68 (By similarity). Forms a complex with SENP6 and UBE2I in response to UV irradiation (By similarity). Identified in a complex with HINT1 (By similarity). Interacts with ATF2 and CUL3 (By similarity). Interacts with NR1D2 (via N-terminus) (By similarity). Component of a SWR1-like complex (By similarity). Interacts with FOXP3 (PubMed:19696312). Interacts with ZBTB49 (By similarity). Interacts with SRF (PubMed:16597624). Interacts with ATF3; promoting autoacetylation and deubiquitination by USP7 (By similarity). Interacts with EP300/p300; interaction promotes KAT5 autoacetylation (By similarity). Interacts with PRKDC; interaction is impaired following KAT5 sumoylation (By similarity). Interacts with GPR50 (By similarity). Interacts with NME3; this interaction enables recruitment of NME3 at DNA damage sites where it plays a role in the repair of DNA (By similarity).</text>
</comment>
<comment type="interaction">
    <interactant intactId="EBI-1169948">
        <id>Q8CHK4</id>
    </interactant>
    <interactant intactId="EBI-1169713">
        <id>P54254</id>
        <label>Atxn1</label>
    </interactant>
    <organismsDiffer>false</organismsDiffer>
    <experiments>2</experiments>
</comment>
<comment type="interaction">
    <interactant intactId="EBI-1169948">
        <id>Q8CHK4</id>
    </interactant>
    <interactant intactId="EBI-21227860">
        <id>O88495</id>
        <label>Gpr50</label>
    </interactant>
    <organismsDiffer>false</organismsDiffer>
    <experiments>3</experiments>
</comment>
<comment type="subcellular location">
    <subcellularLocation>
        <location evidence="13">Nucleus</location>
    </subcellularLocation>
    <subcellularLocation>
        <location evidence="1">Chromosome</location>
    </subcellularLocation>
    <subcellularLocation>
        <location evidence="13">Cytoplasm</location>
    </subcellularLocation>
    <subcellularLocation>
        <location evidence="1">Chromosome</location>
        <location evidence="1">Centromere</location>
        <location evidence="1">Kinetochore</location>
    </subcellularLocation>
    <subcellularLocation>
        <location evidence="1">Cytoplasm</location>
        <location evidence="1">Cytoskeleton</location>
        <location evidence="1">Spindle pole</location>
    </subcellularLocation>
    <subcellularLocation>
        <location evidence="6">Nucleus</location>
        <location evidence="6">Nucleolus</location>
    </subcellularLocation>
    <subcellularLocation>
        <location evidence="1">Cytoplasm</location>
        <location evidence="1">Perinuclear region</location>
    </subcellularLocation>
    <text evidence="1 13">Upon stimulation with EDN1, it is exported from the nucleus to the perinuclear region and UV irradiation induces translocation into punctuate subnuclear structures named nuclear bodies (By similarity). Transiently localizes to kinetochores in early mitosis (By similarity). Localizes to spindle poles when chromosomes align during metaphase (By similarity). Localizes in the cytoplasm and nucleus of round spermatids (PubMed:28694333).</text>
</comment>
<comment type="alternative products">
    <event type="alternative splicing"/>
    <isoform>
        <id>Q8CHK4-1</id>
        <name>1</name>
        <name evidence="25">Tip60alpha</name>
        <sequence type="displayed"/>
    </isoform>
    <isoform>
        <id>Q8CHK4-2</id>
        <name>2</name>
        <name evidence="25">Tip60beta</name>
        <sequence type="described" ref="VSP_009107"/>
    </isoform>
    <isoform>
        <id>Q8CHK4-3</id>
        <name>3</name>
        <name evidence="23">Ltip60</name>
        <sequence type="described" ref="VSP_009106"/>
    </isoform>
    <isoform>
        <id>Q8CHK4-4</id>
        <name>4</name>
        <sequence type="described" ref="VSP_009105"/>
    </isoform>
    <isoform>
        <id>Q8CHK4-5</id>
        <name>5</name>
        <name evidence="25">Tip55</name>
        <sequence type="described" ref="VSP_061400 VSP_061401"/>
    </isoform>
</comment>
<comment type="tissue specificity">
    <text evidence="6">Expressed in testis, heart, brain, kidney and liver. Weakly expressed in lung.</text>
</comment>
<comment type="PTM">
    <text evidence="2 10 15 20 21">Phosphorylated on Ser-86 and Ser-90; enhanced during G2/M phase (PubMed:22539723, PubMed:30297459, PubMed:34608293). The phosphorylated form has a higher activity (PubMed:30297459, PubMed:34608293). Phosphorylation at Ser-90 by CDK1 or CDK9 is a prerequisite for phosphorylation at Ser-86 by GSK3 (PubMed:34608293). Phosphorylation at Ser-86 by GSK3 (GSK3A or GSK3B) activates acetyltransferase and acyltransferase activity (PubMed:22539723, PubMed:30297459). Phosphorylation at Ser-90 by CDK9 promotes KAT5 recruitment to chromatin (By similarity). Phosphorylation by VRK1 following DNA damage promotes KAT5 association with chromatin and histone acetyltransferase activity (PubMed:33076429).</text>
</comment>
<comment type="PTM">
    <text evidence="2">Autoacetylated (By similarity). Autoacetylation is required for histone acetyltransferase activity (By similarity). Autoacetylation at Lys-327 is facilitated by interaction with EP300/p300: it prevents ubiquitination and subsequent degradation by the proteasome and promotes acetylation of target proteins (By similarity). Deacetylated by HDAC3 and SIRT1 (By similarity). Deacetylation by HDAC3 promotes its ubiquitination and cytoplasmic localization (By similarity).</text>
</comment>
<comment type="PTM">
    <text evidence="1">Sumoylated by UBE2I at Lys-430 and Lys-451, leading to increase of its histone acetyltransferase activity in UV-induced DNA damage response, as well as its translocation to nuclear bodies (By similarity). Sumoylation with SUMO2 by PIAS4 at Lys-430 promotes repair of DNA double-strand breaks (DSBs) via homologous recombination (HR) (By similarity). Sumoylation by PIAS4 impairs interaction with PRKDC, inhibiting non-homologous end joining (NHEJ)-mediated repair of DSBs, thereby facilitating HR (By similarity). Desumoylated by SENP3 (By similarity).</text>
</comment>
<comment type="PTM">
    <text evidence="1">Ubiquitinated by MDM2, leading to its proteasome-dependent degradation (By similarity). Ubiquitination is prevented by autoacetylation at Lys-327 (By similarity). Ubiquitinated following deacetylation by HDAC3, leading to cytoplasmic localization (By similarity). Deubiquitinated by USP7 following interaction with ATF3, promoting its stabilization (By similarity).</text>
</comment>
<comment type="disruption phenotype">
    <text evidence="8 13 15 18">Embryonic lethality before implantation (PubMed:17728759). Conditional deletion leads to rapid hematopoietic stem cell loss in both fetal and adult stages (PubMed:32542325). Conditional deletion at postnatal day 15 leads to impaired spermatid development: testes are smaller and show defects in the transition from the transition from round to elongating spermatids (PubMed:28694333). Defects in spermatid development is probably caused by impaired acetylation of histones that affects histone replacement (PubMed:28694333). Conditional deletion in response to DNA damage leads to impaired homologous recombination (HR)repair in response to DNA double-strand breaks (DSBs), associated with increased non-homologous end joining (NHEJ)-mediated repair mediated by TP53BP1 (PubMed:30297459).</text>
</comment>
<comment type="disruption phenotype">
    <molecule>Isoform 5</molecule>
    <text evidence="16">Mice lacking isoform 5 die during mid-gestation (around embryonic day 11.5) (PubMed:30297694). Prior to developmental arrest, embryos display defects in heart and neural tube (PubMed:30297694). Specification of cardiac and neural cell fates is first normal; however, cell division and survival are impaired in heart and neural tube, respectively (PubMed:30297694).</text>
</comment>
<comment type="similarity">
    <text evidence="29">Belongs to the MYST (SAS/MOZ) family.</text>
</comment>